<organism>
    <name type="scientific">Mus musculus</name>
    <name type="common">Mouse</name>
    <dbReference type="NCBI Taxonomy" id="10090"/>
    <lineage>
        <taxon>Eukaryota</taxon>
        <taxon>Metazoa</taxon>
        <taxon>Chordata</taxon>
        <taxon>Craniata</taxon>
        <taxon>Vertebrata</taxon>
        <taxon>Euteleostomi</taxon>
        <taxon>Mammalia</taxon>
        <taxon>Eutheria</taxon>
        <taxon>Euarchontoglires</taxon>
        <taxon>Glires</taxon>
        <taxon>Rodentia</taxon>
        <taxon>Myomorpha</taxon>
        <taxon>Muroidea</taxon>
        <taxon>Muridae</taxon>
        <taxon>Murinae</taxon>
        <taxon>Mus</taxon>
        <taxon>Mus</taxon>
    </lineage>
</organism>
<proteinExistence type="evidence at transcript level"/>
<keyword id="KW-1015">Disulfide bond</keyword>
<keyword id="KW-0325">Glycoprotein</keyword>
<keyword id="KW-0393">Immunoglobulin domain</keyword>
<keyword id="KW-0472">Membrane</keyword>
<keyword id="KW-0675">Receptor</keyword>
<keyword id="KW-1185">Reference proteome</keyword>
<keyword id="KW-0677">Repeat</keyword>
<keyword id="KW-0732">Signal</keyword>
<keyword id="KW-0812">Transmembrane</keyword>
<keyword id="KW-1133">Transmembrane helix</keyword>
<dbReference type="EMBL" id="AK089168">
    <property type="protein sequence ID" value="BAC40774.1"/>
    <property type="molecule type" value="mRNA"/>
</dbReference>
<dbReference type="EMBL" id="AK089193">
    <property type="protein sequence ID" value="BAC40786.1"/>
    <property type="molecule type" value="mRNA"/>
</dbReference>
<dbReference type="EMBL" id="AK171165">
    <property type="protein sequence ID" value="BAE42287.1"/>
    <property type="molecule type" value="mRNA"/>
</dbReference>
<dbReference type="EMBL" id="BC147203">
    <property type="protein sequence ID" value="AAI47204.1"/>
    <property type="molecule type" value="mRNA"/>
</dbReference>
<dbReference type="EMBL" id="BC147204">
    <property type="protein sequence ID" value="AAI47205.1"/>
    <property type="molecule type" value="mRNA"/>
</dbReference>
<dbReference type="RefSeq" id="NP_795984.1">
    <property type="nucleotide sequence ID" value="NM_177010.3"/>
</dbReference>
<dbReference type="SMR" id="Q8BTP3"/>
<dbReference type="FunCoup" id="Q8BTP3">
    <property type="interactions" value="501"/>
</dbReference>
<dbReference type="GlyCosmos" id="Q8BTP3">
    <property type="glycosylation" value="3 sites, No reported glycans"/>
</dbReference>
<dbReference type="GlyGen" id="Q8BTP3">
    <property type="glycosylation" value="3 sites, 1 N-linked glycan (1 site)"/>
</dbReference>
<dbReference type="ProteomicsDB" id="295697"/>
<dbReference type="DNASU" id="319823"/>
<dbReference type="GeneID" id="319823"/>
<dbReference type="KEGG" id="mmu:319823"/>
<dbReference type="AGR" id="MGI:2442797"/>
<dbReference type="CTD" id="344807"/>
<dbReference type="MGI" id="MGI:2442797">
    <property type="gene designation" value="F630003A18Rik"/>
</dbReference>
<dbReference type="InParanoid" id="Q8BTP3"/>
<dbReference type="PhylomeDB" id="Q8BTP3"/>
<dbReference type="PRO" id="PR:Q8BTP3"/>
<dbReference type="Proteomes" id="UP000000589">
    <property type="component" value="Unplaced"/>
</dbReference>
<dbReference type="RNAct" id="Q8BTP3">
    <property type="molecule type" value="protein"/>
</dbReference>
<dbReference type="GO" id="GO:0009986">
    <property type="term" value="C:cell surface"/>
    <property type="evidence" value="ECO:0007669"/>
    <property type="project" value="UniProtKB-ARBA"/>
</dbReference>
<dbReference type="GO" id="GO:0016020">
    <property type="term" value="C:membrane"/>
    <property type="evidence" value="ECO:0007669"/>
    <property type="project" value="UniProtKB-SubCell"/>
</dbReference>
<dbReference type="GO" id="GO:0038023">
    <property type="term" value="F:signaling receptor activity"/>
    <property type="evidence" value="ECO:0007669"/>
    <property type="project" value="InterPro"/>
</dbReference>
<dbReference type="GO" id="GO:0150077">
    <property type="term" value="P:regulation of neuroinflammatory response"/>
    <property type="evidence" value="ECO:0007669"/>
    <property type="project" value="InterPro"/>
</dbReference>
<dbReference type="CDD" id="cd20985">
    <property type="entry name" value="IgV_CD200R-like"/>
    <property type="match status" value="1"/>
</dbReference>
<dbReference type="FunFam" id="2.60.40.10:FF:000584">
    <property type="entry name" value="Cell surface glycoprotein CD200 receptor 1"/>
    <property type="match status" value="1"/>
</dbReference>
<dbReference type="FunFam" id="2.60.40.10:FF:000769">
    <property type="entry name" value="Cell surface glycoprotein CD200 receptor 1"/>
    <property type="match status" value="1"/>
</dbReference>
<dbReference type="Gene3D" id="2.60.40.10">
    <property type="entry name" value="Immunoglobulins"/>
    <property type="match status" value="2"/>
</dbReference>
<dbReference type="InterPro" id="IPR040012">
    <property type="entry name" value="CD200R"/>
</dbReference>
<dbReference type="InterPro" id="IPR013162">
    <property type="entry name" value="CD80_C2-set"/>
</dbReference>
<dbReference type="InterPro" id="IPR007110">
    <property type="entry name" value="Ig-like_dom"/>
</dbReference>
<dbReference type="InterPro" id="IPR036179">
    <property type="entry name" value="Ig-like_dom_sf"/>
</dbReference>
<dbReference type="InterPro" id="IPR013783">
    <property type="entry name" value="Ig-like_fold"/>
</dbReference>
<dbReference type="InterPro" id="IPR003599">
    <property type="entry name" value="Ig_sub"/>
</dbReference>
<dbReference type="InterPro" id="IPR013106">
    <property type="entry name" value="Ig_V-set"/>
</dbReference>
<dbReference type="PANTHER" id="PTHR21462:SF2">
    <property type="entry name" value="CELL SURFACE GLYCOPROTEIN CD200 RECEPTOR 2"/>
    <property type="match status" value="1"/>
</dbReference>
<dbReference type="PANTHER" id="PTHR21462">
    <property type="entry name" value="CELL SURFACE GLYCOPROTEIN OX2 RECEPTOR PRECURSOR"/>
    <property type="match status" value="1"/>
</dbReference>
<dbReference type="Pfam" id="PF08205">
    <property type="entry name" value="C2-set_2"/>
    <property type="match status" value="1"/>
</dbReference>
<dbReference type="Pfam" id="PF07686">
    <property type="entry name" value="V-set"/>
    <property type="match status" value="1"/>
</dbReference>
<dbReference type="SMART" id="SM00409">
    <property type="entry name" value="IG"/>
    <property type="match status" value="1"/>
</dbReference>
<dbReference type="SUPFAM" id="SSF48726">
    <property type="entry name" value="Immunoglobulin"/>
    <property type="match status" value="2"/>
</dbReference>
<dbReference type="PROSITE" id="PS50835">
    <property type="entry name" value="IG_LIKE"/>
    <property type="match status" value="2"/>
</dbReference>
<gene>
    <name type="primary">Cd200r5</name>
</gene>
<evidence type="ECO:0000255" key="1"/>
<evidence type="ECO:0000255" key="2">
    <source>
        <dbReference type="PROSITE-ProRule" id="PRU00114"/>
    </source>
</evidence>
<evidence type="ECO:0000269" key="3">
    <source>
    </source>
</evidence>
<evidence type="ECO:0000305" key="4"/>
<feature type="signal peptide" evidence="1">
    <location>
        <begin position="1"/>
        <end position="25"/>
    </location>
</feature>
<feature type="chain" id="PRO_0000346455" description="Cell surface glycoprotein CD200 receptor 5">
    <location>
        <begin position="26"/>
        <end position="270"/>
    </location>
</feature>
<feature type="topological domain" description="Extracellular" evidence="1">
    <location>
        <begin position="26"/>
        <end position="241"/>
    </location>
</feature>
<feature type="transmembrane region" description="Helical" evidence="1">
    <location>
        <begin position="242"/>
        <end position="262"/>
    </location>
</feature>
<feature type="topological domain" description="Cytoplasmic" evidence="1">
    <location>
        <begin position="263"/>
        <end position="270"/>
    </location>
</feature>
<feature type="domain" description="Ig-like V-type">
    <location>
        <begin position="39"/>
        <end position="145"/>
    </location>
</feature>
<feature type="domain" description="Ig-like C2-type">
    <location>
        <begin position="134"/>
        <end position="229"/>
    </location>
</feature>
<feature type="glycosylation site" description="N-linked (GlcNAc...) asparagine" evidence="1">
    <location>
        <position position="44"/>
    </location>
</feature>
<feature type="glycosylation site" description="N-linked (GlcNAc...) asparagine" evidence="1">
    <location>
        <position position="192"/>
    </location>
</feature>
<feature type="glycosylation site" description="N-linked (GlcNAc...) asparagine" evidence="1">
    <location>
        <position position="221"/>
    </location>
</feature>
<feature type="disulfide bond" evidence="2">
    <location>
        <begin position="59"/>
        <end position="129"/>
    </location>
</feature>
<feature type="disulfide bond" evidence="2">
    <location>
        <begin position="164"/>
        <end position="213"/>
    </location>
</feature>
<feature type="sequence conflict" description="In Ref. 1; BAC40786." evidence="4" ref="1">
    <original>C</original>
    <variation>R</variation>
    <location>
        <position position="129"/>
    </location>
</feature>
<comment type="function">
    <text evidence="3">May not be a receptor for the CD200/OX2 cell surface glycoprotein.</text>
</comment>
<comment type="subcellular location">
    <subcellularLocation>
        <location evidence="4">Membrane</location>
        <topology evidence="4">Single-pass type I membrane protein</topology>
    </subcellularLocation>
</comment>
<comment type="similarity">
    <text evidence="4">Belongs to the CD200R family.</text>
</comment>
<reference key="1">
    <citation type="journal article" date="2005" name="Science">
        <title>The transcriptional landscape of the mammalian genome.</title>
        <authorList>
            <person name="Carninci P."/>
            <person name="Kasukawa T."/>
            <person name="Katayama S."/>
            <person name="Gough J."/>
            <person name="Frith M.C."/>
            <person name="Maeda N."/>
            <person name="Oyama R."/>
            <person name="Ravasi T."/>
            <person name="Lenhard B."/>
            <person name="Wells C."/>
            <person name="Kodzius R."/>
            <person name="Shimokawa K."/>
            <person name="Bajic V.B."/>
            <person name="Brenner S.E."/>
            <person name="Batalov S."/>
            <person name="Forrest A.R."/>
            <person name="Zavolan M."/>
            <person name="Davis M.J."/>
            <person name="Wilming L.G."/>
            <person name="Aidinis V."/>
            <person name="Allen J.E."/>
            <person name="Ambesi-Impiombato A."/>
            <person name="Apweiler R."/>
            <person name="Aturaliya R.N."/>
            <person name="Bailey T.L."/>
            <person name="Bansal M."/>
            <person name="Baxter L."/>
            <person name="Beisel K.W."/>
            <person name="Bersano T."/>
            <person name="Bono H."/>
            <person name="Chalk A.M."/>
            <person name="Chiu K.P."/>
            <person name="Choudhary V."/>
            <person name="Christoffels A."/>
            <person name="Clutterbuck D.R."/>
            <person name="Crowe M.L."/>
            <person name="Dalla E."/>
            <person name="Dalrymple B.P."/>
            <person name="de Bono B."/>
            <person name="Della Gatta G."/>
            <person name="di Bernardo D."/>
            <person name="Down T."/>
            <person name="Engstrom P."/>
            <person name="Fagiolini M."/>
            <person name="Faulkner G."/>
            <person name="Fletcher C.F."/>
            <person name="Fukushima T."/>
            <person name="Furuno M."/>
            <person name="Futaki S."/>
            <person name="Gariboldi M."/>
            <person name="Georgii-Hemming P."/>
            <person name="Gingeras T.R."/>
            <person name="Gojobori T."/>
            <person name="Green R.E."/>
            <person name="Gustincich S."/>
            <person name="Harbers M."/>
            <person name="Hayashi Y."/>
            <person name="Hensch T.K."/>
            <person name="Hirokawa N."/>
            <person name="Hill D."/>
            <person name="Huminiecki L."/>
            <person name="Iacono M."/>
            <person name="Ikeo K."/>
            <person name="Iwama A."/>
            <person name="Ishikawa T."/>
            <person name="Jakt M."/>
            <person name="Kanapin A."/>
            <person name="Katoh M."/>
            <person name="Kawasawa Y."/>
            <person name="Kelso J."/>
            <person name="Kitamura H."/>
            <person name="Kitano H."/>
            <person name="Kollias G."/>
            <person name="Krishnan S.P."/>
            <person name="Kruger A."/>
            <person name="Kummerfeld S.K."/>
            <person name="Kurochkin I.V."/>
            <person name="Lareau L.F."/>
            <person name="Lazarevic D."/>
            <person name="Lipovich L."/>
            <person name="Liu J."/>
            <person name="Liuni S."/>
            <person name="McWilliam S."/>
            <person name="Madan Babu M."/>
            <person name="Madera M."/>
            <person name="Marchionni L."/>
            <person name="Matsuda H."/>
            <person name="Matsuzawa S."/>
            <person name="Miki H."/>
            <person name="Mignone F."/>
            <person name="Miyake S."/>
            <person name="Morris K."/>
            <person name="Mottagui-Tabar S."/>
            <person name="Mulder N."/>
            <person name="Nakano N."/>
            <person name="Nakauchi H."/>
            <person name="Ng P."/>
            <person name="Nilsson R."/>
            <person name="Nishiguchi S."/>
            <person name="Nishikawa S."/>
            <person name="Nori F."/>
            <person name="Ohara O."/>
            <person name="Okazaki Y."/>
            <person name="Orlando V."/>
            <person name="Pang K.C."/>
            <person name="Pavan W.J."/>
            <person name="Pavesi G."/>
            <person name="Pesole G."/>
            <person name="Petrovsky N."/>
            <person name="Piazza S."/>
            <person name="Reed J."/>
            <person name="Reid J.F."/>
            <person name="Ring B.Z."/>
            <person name="Ringwald M."/>
            <person name="Rost B."/>
            <person name="Ruan Y."/>
            <person name="Salzberg S.L."/>
            <person name="Sandelin A."/>
            <person name="Schneider C."/>
            <person name="Schoenbach C."/>
            <person name="Sekiguchi K."/>
            <person name="Semple C.A."/>
            <person name="Seno S."/>
            <person name="Sessa L."/>
            <person name="Sheng Y."/>
            <person name="Shibata Y."/>
            <person name="Shimada H."/>
            <person name="Shimada K."/>
            <person name="Silva D."/>
            <person name="Sinclair B."/>
            <person name="Sperling S."/>
            <person name="Stupka E."/>
            <person name="Sugiura K."/>
            <person name="Sultana R."/>
            <person name="Takenaka Y."/>
            <person name="Taki K."/>
            <person name="Tammoja K."/>
            <person name="Tan S.L."/>
            <person name="Tang S."/>
            <person name="Taylor M.S."/>
            <person name="Tegner J."/>
            <person name="Teichmann S.A."/>
            <person name="Ueda H.R."/>
            <person name="van Nimwegen E."/>
            <person name="Verardo R."/>
            <person name="Wei C.L."/>
            <person name="Yagi K."/>
            <person name="Yamanishi H."/>
            <person name="Zabarovsky E."/>
            <person name="Zhu S."/>
            <person name="Zimmer A."/>
            <person name="Hide W."/>
            <person name="Bult C."/>
            <person name="Grimmond S.M."/>
            <person name="Teasdale R.D."/>
            <person name="Liu E.T."/>
            <person name="Brusic V."/>
            <person name="Quackenbush J."/>
            <person name="Wahlestedt C."/>
            <person name="Mattick J.S."/>
            <person name="Hume D.A."/>
            <person name="Kai C."/>
            <person name="Sasaki D."/>
            <person name="Tomaru Y."/>
            <person name="Fukuda S."/>
            <person name="Kanamori-Katayama M."/>
            <person name="Suzuki M."/>
            <person name="Aoki J."/>
            <person name="Arakawa T."/>
            <person name="Iida J."/>
            <person name="Imamura K."/>
            <person name="Itoh M."/>
            <person name="Kato T."/>
            <person name="Kawaji H."/>
            <person name="Kawagashira N."/>
            <person name="Kawashima T."/>
            <person name="Kojima M."/>
            <person name="Kondo S."/>
            <person name="Konno H."/>
            <person name="Nakano K."/>
            <person name="Ninomiya N."/>
            <person name="Nishio T."/>
            <person name="Okada M."/>
            <person name="Plessy C."/>
            <person name="Shibata K."/>
            <person name="Shiraki T."/>
            <person name="Suzuki S."/>
            <person name="Tagami M."/>
            <person name="Waki K."/>
            <person name="Watahiki A."/>
            <person name="Okamura-Oho Y."/>
            <person name="Suzuki H."/>
            <person name="Kawai J."/>
            <person name="Hayashizaki Y."/>
        </authorList>
    </citation>
    <scope>NUCLEOTIDE SEQUENCE [LARGE SCALE MRNA]</scope>
    <source>
        <strain>NOD</strain>
        <tissue>Dendritic cell</tissue>
    </source>
</reference>
<reference key="2">
    <citation type="journal article" date="2004" name="Genome Res.">
        <title>The status, quality, and expansion of the NIH full-length cDNA project: the Mammalian Gene Collection (MGC).</title>
        <authorList>
            <consortium name="The MGC Project Team"/>
        </authorList>
    </citation>
    <scope>NUCLEOTIDE SEQUENCE [LARGE SCALE MRNA]</scope>
</reference>
<reference key="3">
    <citation type="journal article" date="2005" name="J. Immunol.">
        <title>Recombinant CD200 protein does not bind activating proteins closely related to CD200 receptor.</title>
        <authorList>
            <person name="Hatherley D."/>
            <person name="Cherwinski H.M."/>
            <person name="Moshref M."/>
            <person name="Barclay A.N."/>
        </authorList>
    </citation>
    <scope>FUNCTION</scope>
</reference>
<accession>Q8BTP3</accession>
<accession>Q8BTN8</accession>
<protein>
    <recommendedName>
        <fullName>Cell surface glycoprotein CD200 receptor 5</fullName>
    </recommendedName>
    <alternativeName>
        <fullName>CD200 cell surface glycoprotein receptor-like 5</fullName>
        <shortName>CD200 receptor-like 5</shortName>
    </alternativeName>
    <alternativeName>
        <fullName>CD200 cell surface glycoprotein receptor-like e</fullName>
        <shortName>CD200RLe</shortName>
    </alternativeName>
    <alternativeName>
        <fullName>Cell surface glycoprotein OX2 receptor 5</fullName>
    </alternativeName>
</protein>
<name>MO2R5_MOUSE</name>
<sequence>MHALGRTPALTLLIFINIFVSGSRCTDKNQTIQNDSSSPLTQVNTTVSVQIGTKALLCCFSIPLTKAVLITWIIKLRDLPSCTILYKVDTKTIETSCLDRNITWASTPDHSPELQISAVTLQHEGTYTCETVTPEGNFGRVYDLQVLVPPEVTYFPGKNRTAVCEAMAGKPAAQISWTPDGDCVTTSESHSNGTVTVRSTCHWEQNNVSAVSCIVSHSTGNKSLFIELNQGSTTTTTSLLTILYVKMVLLGIILLHVGFAFFQKRNVIRT</sequence>